<protein>
    <recommendedName>
        <fullName>EP300-interacting inhibitor of differentiation 3</fullName>
        <shortName>EID-3</shortName>
    </recommendedName>
    <alternativeName>
        <fullName>E1A-like inhibitor of differentiation 3</fullName>
    </alternativeName>
    <alternativeName>
        <fullName>EID-1-like inhibitor of differentiation 3</fullName>
    </alternativeName>
    <alternativeName>
        <fullName>Non-structural maintenance of chromosomes element 4 homolog B</fullName>
        <shortName>NS4EB</shortName>
        <shortName>Non-SMC element 4 homolog B</shortName>
    </alternativeName>
</protein>
<dbReference type="EMBL" id="AK098698">
    <property type="protein sequence ID" value="BAC05385.1"/>
    <property type="molecule type" value="mRNA"/>
</dbReference>
<dbReference type="EMBL" id="CH471054">
    <property type="protein sequence ID" value="EAW97747.1"/>
    <property type="molecule type" value="Genomic_DNA"/>
</dbReference>
<dbReference type="EMBL" id="BC027612">
    <property type="protein sequence ID" value="AAH27612.1"/>
    <property type="molecule type" value="mRNA"/>
</dbReference>
<dbReference type="CCDS" id="CCDS53822.1"/>
<dbReference type="RefSeq" id="NP_001008395.1">
    <property type="nucleotide sequence ID" value="NM_001008394.3"/>
</dbReference>
<dbReference type="SMR" id="Q8N140"/>
<dbReference type="BioGRID" id="138924">
    <property type="interactions" value="38"/>
</dbReference>
<dbReference type="ComplexPortal" id="CPX-5992">
    <property type="entry name" value="SMC5-SMC6 SUMO ligase complex, EID3 variant"/>
</dbReference>
<dbReference type="CORUM" id="Q8N140"/>
<dbReference type="FunCoup" id="Q8N140">
    <property type="interactions" value="309"/>
</dbReference>
<dbReference type="IntAct" id="Q8N140">
    <property type="interactions" value="23"/>
</dbReference>
<dbReference type="STRING" id="9606.ENSP00000435619"/>
<dbReference type="GlyGen" id="Q8N140">
    <property type="glycosylation" value="1 site, 1 O-linked glycan (1 site)"/>
</dbReference>
<dbReference type="iPTMnet" id="Q8N140"/>
<dbReference type="PhosphoSitePlus" id="Q8N140"/>
<dbReference type="BioMuta" id="EID3"/>
<dbReference type="DMDM" id="74728487"/>
<dbReference type="jPOST" id="Q8N140"/>
<dbReference type="MassIVE" id="Q8N140"/>
<dbReference type="PaxDb" id="9606-ENSP00000435619"/>
<dbReference type="PeptideAtlas" id="Q8N140"/>
<dbReference type="ProteomicsDB" id="71548"/>
<dbReference type="Antibodypedia" id="54643">
    <property type="antibodies" value="67 antibodies from 16 providers"/>
</dbReference>
<dbReference type="DNASU" id="493861"/>
<dbReference type="Ensembl" id="ENST00000527879.2">
    <property type="protein sequence ID" value="ENSP00000435619.1"/>
    <property type="gene ID" value="ENSG00000255150.2"/>
</dbReference>
<dbReference type="GeneID" id="493861"/>
<dbReference type="KEGG" id="hsa:493861"/>
<dbReference type="MANE-Select" id="ENST00000527879.2">
    <property type="protein sequence ID" value="ENSP00000435619.1"/>
    <property type="RefSeq nucleotide sequence ID" value="NM_001008394.3"/>
    <property type="RefSeq protein sequence ID" value="NP_001008395.1"/>
</dbReference>
<dbReference type="UCSC" id="uc001tkw.4">
    <property type="organism name" value="human"/>
</dbReference>
<dbReference type="AGR" id="HGNC:32961"/>
<dbReference type="CTD" id="493861"/>
<dbReference type="DisGeNET" id="493861"/>
<dbReference type="GeneCards" id="EID3"/>
<dbReference type="HGNC" id="HGNC:32961">
    <property type="gene designation" value="EID3"/>
</dbReference>
<dbReference type="HPA" id="ENSG00000255150">
    <property type="expression patterns" value="Tissue enriched (testis)"/>
</dbReference>
<dbReference type="MIM" id="612986">
    <property type="type" value="gene"/>
</dbReference>
<dbReference type="neXtProt" id="NX_Q8N140"/>
<dbReference type="OpenTargets" id="ENSG00000255150"/>
<dbReference type="PharmGKB" id="PA162384552"/>
<dbReference type="VEuPathDB" id="HostDB:ENSG00000255150"/>
<dbReference type="eggNOG" id="KOG2866">
    <property type="taxonomic scope" value="Eukaryota"/>
</dbReference>
<dbReference type="GeneTree" id="ENSGT00940000165197"/>
<dbReference type="HOGENOM" id="CLU_041037_3_0_1"/>
<dbReference type="InParanoid" id="Q8N140"/>
<dbReference type="OMA" id="RVCIRKK"/>
<dbReference type="OrthoDB" id="361242at2759"/>
<dbReference type="PAN-GO" id="Q8N140">
    <property type="GO annotations" value="3 GO annotations based on evolutionary models"/>
</dbReference>
<dbReference type="PhylomeDB" id="Q8N140"/>
<dbReference type="TreeFam" id="TF313999"/>
<dbReference type="PathwayCommons" id="Q8N140"/>
<dbReference type="Reactome" id="R-HSA-3108214">
    <property type="pathway name" value="SUMOylation of DNA damage response and repair proteins"/>
</dbReference>
<dbReference type="SignaLink" id="Q8N140"/>
<dbReference type="SIGNOR" id="Q8N140"/>
<dbReference type="BioGRID-ORCS" id="493861">
    <property type="hits" value="6 hits in 1140 CRISPR screens"/>
</dbReference>
<dbReference type="GenomeRNAi" id="493861"/>
<dbReference type="Pharos" id="Q8N140">
    <property type="development level" value="Tdark"/>
</dbReference>
<dbReference type="PRO" id="PR:Q8N140"/>
<dbReference type="Proteomes" id="UP000005640">
    <property type="component" value="Chromosome 12"/>
</dbReference>
<dbReference type="RNAct" id="Q8N140">
    <property type="molecule type" value="protein"/>
</dbReference>
<dbReference type="Bgee" id="ENSG00000255150">
    <property type="expression patterns" value="Expressed in left testis and 130 other cell types or tissues"/>
</dbReference>
<dbReference type="ExpressionAtlas" id="Q8N140">
    <property type="expression patterns" value="baseline and differential"/>
</dbReference>
<dbReference type="GO" id="GO:0000781">
    <property type="term" value="C:chromosome, telomeric region"/>
    <property type="evidence" value="ECO:0000303"/>
    <property type="project" value="ComplexPortal"/>
</dbReference>
<dbReference type="GO" id="GO:0005737">
    <property type="term" value="C:cytoplasm"/>
    <property type="evidence" value="ECO:0007669"/>
    <property type="project" value="UniProtKB-SubCell"/>
</dbReference>
<dbReference type="GO" id="GO:0005730">
    <property type="term" value="C:nucleolus"/>
    <property type="evidence" value="ECO:0000314"/>
    <property type="project" value="HPA"/>
</dbReference>
<dbReference type="GO" id="GO:0005654">
    <property type="term" value="C:nucleoplasm"/>
    <property type="evidence" value="ECO:0000314"/>
    <property type="project" value="HPA"/>
</dbReference>
<dbReference type="GO" id="GO:0005634">
    <property type="term" value="C:nucleus"/>
    <property type="evidence" value="ECO:0000318"/>
    <property type="project" value="GO_Central"/>
</dbReference>
<dbReference type="GO" id="GO:0030915">
    <property type="term" value="C:Smc5-Smc6 complex"/>
    <property type="evidence" value="ECO:0000314"/>
    <property type="project" value="UniProtKB"/>
</dbReference>
<dbReference type="GO" id="GO:0140588">
    <property type="term" value="P:chromatin looping"/>
    <property type="evidence" value="ECO:0000303"/>
    <property type="project" value="ComplexPortal"/>
</dbReference>
<dbReference type="GO" id="GO:0006281">
    <property type="term" value="P:DNA repair"/>
    <property type="evidence" value="ECO:0000318"/>
    <property type="project" value="GO_Central"/>
</dbReference>
<dbReference type="GO" id="GO:0000724">
    <property type="term" value="P:double-strand break repair via homologous recombination"/>
    <property type="evidence" value="ECO:0000303"/>
    <property type="project" value="ComplexPortal"/>
</dbReference>
<dbReference type="GO" id="GO:0016925">
    <property type="term" value="P:protein sumoylation"/>
    <property type="evidence" value="ECO:0000303"/>
    <property type="project" value="ComplexPortal"/>
</dbReference>
<dbReference type="GO" id="GO:0032204">
    <property type="term" value="P:regulation of telomere maintenance"/>
    <property type="evidence" value="ECO:0000303"/>
    <property type="project" value="ComplexPortal"/>
</dbReference>
<dbReference type="InterPro" id="IPR027786">
    <property type="entry name" value="Nse4/EID"/>
</dbReference>
<dbReference type="InterPro" id="IPR014854">
    <property type="entry name" value="Nse4_C"/>
</dbReference>
<dbReference type="InterPro" id="IPR029225">
    <property type="entry name" value="Nse4_Nse3-bd"/>
</dbReference>
<dbReference type="PANTHER" id="PTHR16140:SF1">
    <property type="entry name" value="EP300-INTERACTING INHIBITOR OF DIFFERENTIATION 3"/>
    <property type="match status" value="1"/>
</dbReference>
<dbReference type="PANTHER" id="PTHR16140">
    <property type="entry name" value="NON-STRUCTURAL MAINTENANCE OF CHROMOSOMES ELEMENT 4"/>
    <property type="match status" value="1"/>
</dbReference>
<dbReference type="Pfam" id="PF15412">
    <property type="entry name" value="Nse4-Nse3_bdg"/>
    <property type="match status" value="1"/>
</dbReference>
<dbReference type="Pfam" id="PF08743">
    <property type="entry name" value="Nse4_C"/>
    <property type="match status" value="1"/>
</dbReference>
<gene>
    <name evidence="8" type="primary">EID3</name>
</gene>
<organism>
    <name type="scientific">Homo sapiens</name>
    <name type="common">Human</name>
    <dbReference type="NCBI Taxonomy" id="9606"/>
    <lineage>
        <taxon>Eukaryota</taxon>
        <taxon>Metazoa</taxon>
        <taxon>Chordata</taxon>
        <taxon>Craniata</taxon>
        <taxon>Vertebrata</taxon>
        <taxon>Euteleostomi</taxon>
        <taxon>Mammalia</taxon>
        <taxon>Eutheria</taxon>
        <taxon>Euarchontoglires</taxon>
        <taxon>Primates</taxon>
        <taxon>Haplorrhini</taxon>
        <taxon>Catarrhini</taxon>
        <taxon>Hominidae</taxon>
        <taxon>Homo</taxon>
    </lineage>
</organism>
<name>EID3_HUMAN</name>
<reference evidence="6" key="1">
    <citation type="journal article" date="2005" name="Nucleic Acids Res.">
        <title>EID3 is a novel EID family member and an inhibitor of CBP-dependent co-activation.</title>
        <authorList>
            <person name="Bavner A."/>
            <person name="Matthews J."/>
            <person name="Sanyal S."/>
            <person name="Gustafsson J.-A."/>
            <person name="Treuter E."/>
        </authorList>
    </citation>
    <scope>NUCLEOTIDE SEQUENCE [MRNA]</scope>
    <scope>FUNCTION</scope>
    <scope>INTERACTION WITH CREBBP</scope>
    <scope>SUBCELLULAR LOCATION</scope>
    <scope>TISSUE SPECIFICITY</scope>
    <source>
        <tissue>Testis</tissue>
    </source>
</reference>
<reference evidence="9" key="2">
    <citation type="journal article" date="2004" name="Nat. Genet.">
        <title>Complete sequencing and characterization of 21,243 full-length human cDNAs.</title>
        <authorList>
            <person name="Ota T."/>
            <person name="Suzuki Y."/>
            <person name="Nishikawa T."/>
            <person name="Otsuki T."/>
            <person name="Sugiyama T."/>
            <person name="Irie R."/>
            <person name="Wakamatsu A."/>
            <person name="Hayashi K."/>
            <person name="Sato H."/>
            <person name="Nagai K."/>
            <person name="Kimura K."/>
            <person name="Makita H."/>
            <person name="Sekine M."/>
            <person name="Obayashi M."/>
            <person name="Nishi T."/>
            <person name="Shibahara T."/>
            <person name="Tanaka T."/>
            <person name="Ishii S."/>
            <person name="Yamamoto J."/>
            <person name="Saito K."/>
            <person name="Kawai Y."/>
            <person name="Isono Y."/>
            <person name="Nakamura Y."/>
            <person name="Nagahari K."/>
            <person name="Murakami K."/>
            <person name="Yasuda T."/>
            <person name="Iwayanagi T."/>
            <person name="Wagatsuma M."/>
            <person name="Shiratori A."/>
            <person name="Sudo H."/>
            <person name="Hosoiri T."/>
            <person name="Kaku Y."/>
            <person name="Kodaira H."/>
            <person name="Kondo H."/>
            <person name="Sugawara M."/>
            <person name="Takahashi M."/>
            <person name="Kanda K."/>
            <person name="Yokoi T."/>
            <person name="Furuya T."/>
            <person name="Kikkawa E."/>
            <person name="Omura Y."/>
            <person name="Abe K."/>
            <person name="Kamihara K."/>
            <person name="Katsuta N."/>
            <person name="Sato K."/>
            <person name="Tanikawa M."/>
            <person name="Yamazaki M."/>
            <person name="Ninomiya K."/>
            <person name="Ishibashi T."/>
            <person name="Yamashita H."/>
            <person name="Murakawa K."/>
            <person name="Fujimori K."/>
            <person name="Tanai H."/>
            <person name="Kimata M."/>
            <person name="Watanabe M."/>
            <person name="Hiraoka S."/>
            <person name="Chiba Y."/>
            <person name="Ishida S."/>
            <person name="Ono Y."/>
            <person name="Takiguchi S."/>
            <person name="Watanabe S."/>
            <person name="Yosida M."/>
            <person name="Hotuta T."/>
            <person name="Kusano J."/>
            <person name="Kanehori K."/>
            <person name="Takahashi-Fujii A."/>
            <person name="Hara H."/>
            <person name="Tanase T.-O."/>
            <person name="Nomura Y."/>
            <person name="Togiya S."/>
            <person name="Komai F."/>
            <person name="Hara R."/>
            <person name="Takeuchi K."/>
            <person name="Arita M."/>
            <person name="Imose N."/>
            <person name="Musashino K."/>
            <person name="Yuuki H."/>
            <person name="Oshima A."/>
            <person name="Sasaki N."/>
            <person name="Aotsuka S."/>
            <person name="Yoshikawa Y."/>
            <person name="Matsunawa H."/>
            <person name="Ichihara T."/>
            <person name="Shiohata N."/>
            <person name="Sano S."/>
            <person name="Moriya S."/>
            <person name="Momiyama H."/>
            <person name="Satoh N."/>
            <person name="Takami S."/>
            <person name="Terashima Y."/>
            <person name="Suzuki O."/>
            <person name="Nakagawa S."/>
            <person name="Senoh A."/>
            <person name="Mizoguchi H."/>
            <person name="Goto Y."/>
            <person name="Shimizu F."/>
            <person name="Wakebe H."/>
            <person name="Hishigaki H."/>
            <person name="Watanabe T."/>
            <person name="Sugiyama A."/>
            <person name="Takemoto M."/>
            <person name="Kawakami B."/>
            <person name="Yamazaki M."/>
            <person name="Watanabe K."/>
            <person name="Kumagai A."/>
            <person name="Itakura S."/>
            <person name="Fukuzumi Y."/>
            <person name="Fujimori Y."/>
            <person name="Komiyama M."/>
            <person name="Tashiro H."/>
            <person name="Tanigami A."/>
            <person name="Fujiwara T."/>
            <person name="Ono T."/>
            <person name="Yamada K."/>
            <person name="Fujii Y."/>
            <person name="Ozaki K."/>
            <person name="Hirao M."/>
            <person name="Ohmori Y."/>
            <person name="Kawabata A."/>
            <person name="Hikiji T."/>
            <person name="Kobatake N."/>
            <person name="Inagaki H."/>
            <person name="Ikema Y."/>
            <person name="Okamoto S."/>
            <person name="Okitani R."/>
            <person name="Kawakami T."/>
            <person name="Noguchi S."/>
            <person name="Itoh T."/>
            <person name="Shigeta K."/>
            <person name="Senba T."/>
            <person name="Matsumura K."/>
            <person name="Nakajima Y."/>
            <person name="Mizuno T."/>
            <person name="Morinaga M."/>
            <person name="Sasaki M."/>
            <person name="Togashi T."/>
            <person name="Oyama M."/>
            <person name="Hata H."/>
            <person name="Watanabe M."/>
            <person name="Komatsu T."/>
            <person name="Mizushima-Sugano J."/>
            <person name="Satoh T."/>
            <person name="Shirai Y."/>
            <person name="Takahashi Y."/>
            <person name="Nakagawa K."/>
            <person name="Okumura K."/>
            <person name="Nagase T."/>
            <person name="Nomura N."/>
            <person name="Kikuchi H."/>
            <person name="Masuho Y."/>
            <person name="Yamashita R."/>
            <person name="Nakai K."/>
            <person name="Yada T."/>
            <person name="Nakamura Y."/>
            <person name="Ohara O."/>
            <person name="Isogai T."/>
            <person name="Sugano S."/>
        </authorList>
    </citation>
    <scope>NUCLEOTIDE SEQUENCE [LARGE SCALE MRNA]</scope>
    <source>
        <tissue evidence="9">Testis</tissue>
    </source>
</reference>
<reference evidence="10" key="3">
    <citation type="submission" date="2005-07" db="EMBL/GenBank/DDBJ databases">
        <authorList>
            <person name="Mural R.J."/>
            <person name="Istrail S."/>
            <person name="Sutton G.G."/>
            <person name="Florea L."/>
            <person name="Halpern A.L."/>
            <person name="Mobarry C.M."/>
            <person name="Lippert R."/>
            <person name="Walenz B."/>
            <person name="Shatkay H."/>
            <person name="Dew I."/>
            <person name="Miller J.R."/>
            <person name="Flanigan M.J."/>
            <person name="Edwards N.J."/>
            <person name="Bolanos R."/>
            <person name="Fasulo D."/>
            <person name="Halldorsson B.V."/>
            <person name="Hannenhalli S."/>
            <person name="Turner R."/>
            <person name="Yooseph S."/>
            <person name="Lu F."/>
            <person name="Nusskern D.R."/>
            <person name="Shue B.C."/>
            <person name="Zheng X.H."/>
            <person name="Zhong F."/>
            <person name="Delcher A.L."/>
            <person name="Huson D.H."/>
            <person name="Kravitz S.A."/>
            <person name="Mouchard L."/>
            <person name="Reinert K."/>
            <person name="Remington K.A."/>
            <person name="Clark A.G."/>
            <person name="Waterman M.S."/>
            <person name="Eichler E.E."/>
            <person name="Adams M.D."/>
            <person name="Hunkapiller M.W."/>
            <person name="Myers E.W."/>
            <person name="Venter J.C."/>
        </authorList>
    </citation>
    <scope>NUCLEOTIDE SEQUENCE [LARGE SCALE GENOMIC DNA]</scope>
</reference>
<reference evidence="8" key="4">
    <citation type="journal article" date="2004" name="Genome Res.">
        <title>The status, quality, and expansion of the NIH full-length cDNA project: the Mammalian Gene Collection (MGC).</title>
        <authorList>
            <consortium name="The MGC Project Team"/>
        </authorList>
    </citation>
    <scope>NUCLEOTIDE SEQUENCE [LARGE SCALE MRNA]</scope>
    <source>
        <tissue evidence="8">Testis</tissue>
    </source>
</reference>
<reference key="5">
    <citation type="journal article" date="2008" name="Mol. Cell. Biol.">
        <title>Identification of the proteins, including MAGEG1, that make up the human SMC5-6 protein complex.</title>
        <authorList>
            <person name="Taylor E.M."/>
            <person name="Copsey A.C."/>
            <person name="Hudson J.J."/>
            <person name="Vidot S."/>
            <person name="Lehmann A.R."/>
        </authorList>
    </citation>
    <scope>INTERACTION WITH SMC6 AND NSMCE1</scope>
</reference>
<reference key="6">
    <citation type="journal article" date="2011" name="PLoS ONE">
        <title>Interactions between the Nse3 and Nse4 components of the SMC5-6 complex identify evolutionarily conserved interactions between MAGE and EID Families.</title>
        <authorList>
            <person name="Hudson J.J."/>
            <person name="Bednarova K."/>
            <person name="Kozakova L."/>
            <person name="Liao C."/>
            <person name="Guerineau M."/>
            <person name="Colnaghi R."/>
            <person name="Vidot S."/>
            <person name="Marek J."/>
            <person name="Bathula S.R."/>
            <person name="Lehmann A.R."/>
            <person name="Palecek J."/>
        </authorList>
    </citation>
    <scope>INTERACTION WITH NSMCE3</scope>
</reference>
<proteinExistence type="evidence at protein level"/>
<keyword id="KW-0158">Chromosome</keyword>
<keyword id="KW-0963">Cytoplasm</keyword>
<keyword id="KW-0227">DNA damage</keyword>
<keyword id="KW-0233">DNA recombination</keyword>
<keyword id="KW-0234">DNA repair</keyword>
<keyword id="KW-0539">Nucleus</keyword>
<keyword id="KW-1267">Proteomics identification</keyword>
<keyword id="KW-1185">Reference proteome</keyword>
<keyword id="KW-0678">Repressor</keyword>
<keyword id="KW-0779">Telomere</keyword>
<keyword id="KW-0804">Transcription</keyword>
<keyword id="KW-0805">Transcription regulation</keyword>
<feature type="chain" id="PRO_0000315905" description="EP300-interacting inhibitor of differentiation 3">
    <location>
        <begin position="1"/>
        <end position="333"/>
    </location>
</feature>
<sequence length="333" mass="38168">MKMDVSVRAAGCSDDLSSGEADVDPKLLELTADEEKCRSIRRQYRQLMYCVRQNREDIVSSANNSLTEALEEANVLFDGVSRTREAALDARFLVMASDLGKEKAKQLNSDMNFFNQLAFCDFLFLFVGLNWMEGDPDKLSDCDDSIALSFWKAIEKEATSWMVKAETFHFVFGSFKLERSAPKPRLEHQKKVRKMEENGNMPTKLQKLDLSSYPEATEKNVERILGLLQTYFRKYPDTPVSYFEFVIDPNSFSRTVENIFYVSFIVRDGFARIRLDEDRLPILEPMNVNQMGEGNDSSCHGRKQGVISLTLQEWKNIVAAFEISEAMITYSSY</sequence>
<accession>Q8N140</accession>
<evidence type="ECO:0000250" key="1"/>
<evidence type="ECO:0000255" key="2"/>
<evidence type="ECO:0000269" key="3">
    <source>
    </source>
</evidence>
<evidence type="ECO:0000269" key="4">
    <source>
    </source>
</evidence>
<evidence type="ECO:0000269" key="5">
    <source>
    </source>
</evidence>
<evidence type="ECO:0000305" key="6"/>
<evidence type="ECO:0000305" key="7">
    <source>
    </source>
</evidence>
<evidence type="ECO:0000312" key="8">
    <source>
        <dbReference type="EMBL" id="AAH27612.1"/>
    </source>
</evidence>
<evidence type="ECO:0000312" key="9">
    <source>
        <dbReference type="EMBL" id="BAC05385.1"/>
    </source>
</evidence>
<evidence type="ECO:0000312" key="10">
    <source>
        <dbReference type="EMBL" id="EAW97747.1"/>
    </source>
</evidence>
<comment type="function">
    <text evidence="3">Tissue-specific component of the SMC5-SMC6 complex, a complex involved in repair of DNA double-strand breaks by homologous recombination. The complex may promote sister chromatid homologous recombination by recruiting the SMC1-SMC3 cohesin complex to double-strand breaks. The complex is required for telomere maintenance via recombination and mediates sumoylation of shelterin complex (telosome) components.</text>
</comment>
<comment type="function">
    <text evidence="3">Acts as a repressor of nuclear receptor-dependent transcription possibly by interfering with CREBBP-dependent coactivation. May function as a coinhibitor of other CREBBP/EP300-dependent transcription factors.</text>
</comment>
<comment type="subunit">
    <text evidence="1 3 4 5">Component of the SMC5-SMC6 complex which consists at least of SMC5, SMC6, NSMCE2, NSMCE1, NSMCE4A or EID3 and NSMCE3; EID3 seems to be a testis-specific subunit. NSMCE1, NSMCE4A or EID3 and NSMCE3 probably form a subcomplex that bridges the head domains of the SMC5:SMC6 heterodimer. Homodimer, and heterodimer with EID2 (By similarity). Interacts with the C-terminal region of CREBBP.</text>
</comment>
<comment type="interaction">
    <interactant intactId="EBI-744483">
        <id>Q8N140</id>
    </interactant>
    <interactant intactId="EBI-740978">
        <id>P43355</id>
        <label>MAGEA1</label>
    </interactant>
    <organismsDiffer>false</organismsDiffer>
    <experiments>3</experiments>
</comment>
<comment type="interaction">
    <interactant intactId="EBI-744483">
        <id>Q8N140</id>
    </interactant>
    <interactant intactId="EBI-2557356">
        <id>Q96MG7</id>
        <label>NSMCE3</label>
    </interactant>
    <organismsDiffer>false</organismsDiffer>
    <experiments>10</experiments>
</comment>
<comment type="interaction">
    <interactant intactId="EBI-744483">
        <id>Q8N140</id>
    </interactant>
    <interactant intactId="EBI-605405">
        <id>Q8IY18</id>
        <label>SMC5</label>
    </interactant>
    <organismsDiffer>false</organismsDiffer>
    <experiments>5</experiments>
</comment>
<comment type="subcellular location">
    <subcellularLocation>
        <location evidence="3">Nucleus</location>
    </subcellularLocation>
    <subcellularLocation>
        <location evidence="3">Cytoplasm</location>
    </subcellularLocation>
    <subcellularLocation>
        <location evidence="7">Chromosome</location>
        <location evidence="7">Telomere</location>
    </subcellularLocation>
    <text evidence="3">May shuttle between nucleus and cytoplasm.</text>
</comment>
<comment type="tissue specificity">
    <text evidence="3">Highly expressed in testis.</text>
</comment>
<comment type="similarity">
    <text evidence="2">Belongs to the NSE4 family.</text>
</comment>